<sequence>MKVTVCFGRTRVVVPCGDGRMKVFSLIQQAVTRYRKAVAKDPNYWIQVHRLEHGDGGILDLDDILCDVADDKDRLVAVFDEQDPHHGGDGTSASFTGTQSPEIFGSELGTNNVSAFQPYQATSEIEVTPSVLRANMPLHVRRSSDPALTGLSTSVSDNNFSSEEPSRKNPTRWSTTAGFLKQNTAGSPKTCDRKKDENYRSLPRDPSSWSNQFQRDNARSSLSASHPMVDRWLEKQEQDEEGTEEDSSRVEPVGHADTGLENMPNFSLDDMVKLVQVPNDGGPLGIHVVPFSARGGRTLGLLVKRLEKGGKAEQENLFHENDCIVRINDGDLRNRRFEQAQHMFRQAMRARVIWFHVVPAANKEQYEQLSQREKNNYSPGRFSPDSHCVANRSVANNAPQALPRAPRLSQPPEQLDAHPRLPHSAHASTKPPAAPALAPPSVLSTNVGSVYNTKKVGKRLNIQLKKGTEGLGFSITSRDVTIGGSAPIYVKNILPRGAAIQDGRLKAGDRLIEVNGVDLAGKSQEEVVSLLRSTKMEGTVSLLVFRQEEAFHPREMNAEPSQMQTPKETKAEDEDVVLTPDGTREFLTFEVPLNDSGSAGLGVSVKGNRSKENHADLGIFVKSIINGGAASKDGRLRVNDQLIAVNGESLLGKANQEAMETLRRSMSTEGNKRGMIQLIVARRISRCNELRSPGSPAAPELPIETELDDRERRISHSLYSGIEGLDESPTRNAALSRIMGKCQLSPTVNMPHDDTVMIEDDRLPVLPPHLSDQSSSSSHDDVGFIMTEAGTWAKATISDSADCSLSPDVDPVLAFQREGFGRQSMSEKRTKQFSDASQLDFVKTRKSKSMDLVADETKLNTVDDQRAGSPSRDVGPSLGLKKSSSLESLQTAVAEVTLNGNIPFHRPRPRIIRGRGCNESFRAAIDKSYDKPMVDDDDEGMETLEEDTEESSRSGRESVSTSSDQPSYSLERQMNGDPEKRDKTERKKDKAGKDKKKDREKEKDKLKAKKGMLKGLGDMFRFGKHRKDDKMEKMGRIKIQDSFTSEEDRVRMKEEQERIQAKTREFRERQARERDYAEIQDFHRTFGCDDELLYGGMSSYEGCLALNARPQSPREGHLMDTLYAQVKKPRSSKPGDSNRSTPSNHDRIQRLRQEFQQAKQDEDVEDRRRTYSFEQSWSSSRPASQSGRHSVSVEVQVQRQRQEERESFQQAQRQYSSLPRQSRKNASSISQDSWEQNYAPGEGFQSAKENPRYSSYQGSRNGYLGGHGFNARVMLETQELLRQEQRRKEQQLKKQPPADGVRGPFRQDVPPSPSQVARLNRLQTPEKGRPFYS</sequence>
<reference key="1">
    <citation type="journal article" date="1999" name="J. Biol. Chem.">
        <title>The carboxyl terminus of B class ephrins constitutes a PDZ domain binding motif.</title>
        <authorList>
            <person name="Lin D."/>
            <person name="Gish G.D."/>
            <person name="Songyang Z."/>
            <person name="Pawson T."/>
        </authorList>
    </citation>
    <scope>NUCLEOTIDE SEQUENCE [MRNA] (ISOFORM 3)</scope>
    <source>
        <strain>NIH Swiss</strain>
        <tissue>Embryo</tissue>
    </source>
</reference>
<reference key="2">
    <citation type="journal article" date="2000" name="Nat. Cell Biol.">
        <title>A mammalian PAR-3-PAR-6 complex implicated in Cdc42/Rac1 and aPKC signalling and cell polarity.</title>
        <authorList>
            <person name="Lin D."/>
            <person name="Edwards A.S."/>
            <person name="Fawcett J.P."/>
            <person name="Mbamalu G."/>
            <person name="Scott J.D."/>
            <person name="Pawson T."/>
        </authorList>
    </citation>
    <scope>NUCLEOTIDE SEQUENCE [MRNA] (ISOFORMS 1; 2 AND 3)</scope>
    <scope>SUBCELLULAR LOCATION</scope>
    <scope>PHOSPHORYLATION BY PRKCZ</scope>
    <scope>INTERACTION WITH PRKCI AND PARD6A</scope>
    <scope>SUBUNIT OF A COMPLEX CONTAINING PARD6A AND CDC42</scope>
    <scope>MUTAGENESIS OF 824-SER--SER-826</scope>
    <source>
        <strain>NIH Swiss</strain>
    </source>
</reference>
<reference key="3">
    <citation type="journal article" date="2005" name="Dev. Biol.">
        <title>PAR-3 defines a central subdomain of the cortical actin cap in mouse eggs.</title>
        <authorList>
            <person name="Duncan F.E."/>
            <person name="Moss S.B."/>
            <person name="Schultz R.M."/>
            <person name="Williams C.J."/>
        </authorList>
    </citation>
    <scope>NUCLEOTIDE SEQUENCE [MRNA] (ISOFORMS 4 AND 5)</scope>
    <scope>SUBCELLULAR LOCATION</scope>
    <scope>DEVELOPMENTAL STAGE</scope>
    <scope>PTM</scope>
    <source>
        <strain>C57BL/6J x SJL/J</strain>
    </source>
</reference>
<reference key="4">
    <citation type="journal article" date="2005" name="Science">
        <title>The transcriptional landscape of the mammalian genome.</title>
        <authorList>
            <person name="Carninci P."/>
            <person name="Kasukawa T."/>
            <person name="Katayama S."/>
            <person name="Gough J."/>
            <person name="Frith M.C."/>
            <person name="Maeda N."/>
            <person name="Oyama R."/>
            <person name="Ravasi T."/>
            <person name="Lenhard B."/>
            <person name="Wells C."/>
            <person name="Kodzius R."/>
            <person name="Shimokawa K."/>
            <person name="Bajic V.B."/>
            <person name="Brenner S.E."/>
            <person name="Batalov S."/>
            <person name="Forrest A.R."/>
            <person name="Zavolan M."/>
            <person name="Davis M.J."/>
            <person name="Wilming L.G."/>
            <person name="Aidinis V."/>
            <person name="Allen J.E."/>
            <person name="Ambesi-Impiombato A."/>
            <person name="Apweiler R."/>
            <person name="Aturaliya R.N."/>
            <person name="Bailey T.L."/>
            <person name="Bansal M."/>
            <person name="Baxter L."/>
            <person name="Beisel K.W."/>
            <person name="Bersano T."/>
            <person name="Bono H."/>
            <person name="Chalk A.M."/>
            <person name="Chiu K.P."/>
            <person name="Choudhary V."/>
            <person name="Christoffels A."/>
            <person name="Clutterbuck D.R."/>
            <person name="Crowe M.L."/>
            <person name="Dalla E."/>
            <person name="Dalrymple B.P."/>
            <person name="de Bono B."/>
            <person name="Della Gatta G."/>
            <person name="di Bernardo D."/>
            <person name="Down T."/>
            <person name="Engstrom P."/>
            <person name="Fagiolini M."/>
            <person name="Faulkner G."/>
            <person name="Fletcher C.F."/>
            <person name="Fukushima T."/>
            <person name="Furuno M."/>
            <person name="Futaki S."/>
            <person name="Gariboldi M."/>
            <person name="Georgii-Hemming P."/>
            <person name="Gingeras T.R."/>
            <person name="Gojobori T."/>
            <person name="Green R.E."/>
            <person name="Gustincich S."/>
            <person name="Harbers M."/>
            <person name="Hayashi Y."/>
            <person name="Hensch T.K."/>
            <person name="Hirokawa N."/>
            <person name="Hill D."/>
            <person name="Huminiecki L."/>
            <person name="Iacono M."/>
            <person name="Ikeo K."/>
            <person name="Iwama A."/>
            <person name="Ishikawa T."/>
            <person name="Jakt M."/>
            <person name="Kanapin A."/>
            <person name="Katoh M."/>
            <person name="Kawasawa Y."/>
            <person name="Kelso J."/>
            <person name="Kitamura H."/>
            <person name="Kitano H."/>
            <person name="Kollias G."/>
            <person name="Krishnan S.P."/>
            <person name="Kruger A."/>
            <person name="Kummerfeld S.K."/>
            <person name="Kurochkin I.V."/>
            <person name="Lareau L.F."/>
            <person name="Lazarevic D."/>
            <person name="Lipovich L."/>
            <person name="Liu J."/>
            <person name="Liuni S."/>
            <person name="McWilliam S."/>
            <person name="Madan Babu M."/>
            <person name="Madera M."/>
            <person name="Marchionni L."/>
            <person name="Matsuda H."/>
            <person name="Matsuzawa S."/>
            <person name="Miki H."/>
            <person name="Mignone F."/>
            <person name="Miyake S."/>
            <person name="Morris K."/>
            <person name="Mottagui-Tabar S."/>
            <person name="Mulder N."/>
            <person name="Nakano N."/>
            <person name="Nakauchi H."/>
            <person name="Ng P."/>
            <person name="Nilsson R."/>
            <person name="Nishiguchi S."/>
            <person name="Nishikawa S."/>
            <person name="Nori F."/>
            <person name="Ohara O."/>
            <person name="Okazaki Y."/>
            <person name="Orlando V."/>
            <person name="Pang K.C."/>
            <person name="Pavan W.J."/>
            <person name="Pavesi G."/>
            <person name="Pesole G."/>
            <person name="Petrovsky N."/>
            <person name="Piazza S."/>
            <person name="Reed J."/>
            <person name="Reid J.F."/>
            <person name="Ring B.Z."/>
            <person name="Ringwald M."/>
            <person name="Rost B."/>
            <person name="Ruan Y."/>
            <person name="Salzberg S.L."/>
            <person name="Sandelin A."/>
            <person name="Schneider C."/>
            <person name="Schoenbach C."/>
            <person name="Sekiguchi K."/>
            <person name="Semple C.A."/>
            <person name="Seno S."/>
            <person name="Sessa L."/>
            <person name="Sheng Y."/>
            <person name="Shibata Y."/>
            <person name="Shimada H."/>
            <person name="Shimada K."/>
            <person name="Silva D."/>
            <person name="Sinclair B."/>
            <person name="Sperling S."/>
            <person name="Stupka E."/>
            <person name="Sugiura K."/>
            <person name="Sultana R."/>
            <person name="Takenaka Y."/>
            <person name="Taki K."/>
            <person name="Tammoja K."/>
            <person name="Tan S.L."/>
            <person name="Tang S."/>
            <person name="Taylor M.S."/>
            <person name="Tegner J."/>
            <person name="Teichmann S.A."/>
            <person name="Ueda H.R."/>
            <person name="van Nimwegen E."/>
            <person name="Verardo R."/>
            <person name="Wei C.L."/>
            <person name="Yagi K."/>
            <person name="Yamanishi H."/>
            <person name="Zabarovsky E."/>
            <person name="Zhu S."/>
            <person name="Zimmer A."/>
            <person name="Hide W."/>
            <person name="Bult C."/>
            <person name="Grimmond S.M."/>
            <person name="Teasdale R.D."/>
            <person name="Liu E.T."/>
            <person name="Brusic V."/>
            <person name="Quackenbush J."/>
            <person name="Wahlestedt C."/>
            <person name="Mattick J.S."/>
            <person name="Hume D.A."/>
            <person name="Kai C."/>
            <person name="Sasaki D."/>
            <person name="Tomaru Y."/>
            <person name="Fukuda S."/>
            <person name="Kanamori-Katayama M."/>
            <person name="Suzuki M."/>
            <person name="Aoki J."/>
            <person name="Arakawa T."/>
            <person name="Iida J."/>
            <person name="Imamura K."/>
            <person name="Itoh M."/>
            <person name="Kato T."/>
            <person name="Kawaji H."/>
            <person name="Kawagashira N."/>
            <person name="Kawashima T."/>
            <person name="Kojima M."/>
            <person name="Kondo S."/>
            <person name="Konno H."/>
            <person name="Nakano K."/>
            <person name="Ninomiya N."/>
            <person name="Nishio T."/>
            <person name="Okada M."/>
            <person name="Plessy C."/>
            <person name="Shibata K."/>
            <person name="Shiraki T."/>
            <person name="Suzuki S."/>
            <person name="Tagami M."/>
            <person name="Waki K."/>
            <person name="Watahiki A."/>
            <person name="Okamura-Oho Y."/>
            <person name="Suzuki H."/>
            <person name="Kawai J."/>
            <person name="Hayashizaki Y."/>
        </authorList>
    </citation>
    <scope>NUCLEOTIDE SEQUENCE [LARGE SCALE MRNA] OF 458-1333 (ISOFORM 1)</scope>
    <source>
        <strain>C57BL/6J</strain>
        <tissue>Vagina</tissue>
    </source>
</reference>
<reference key="5">
    <citation type="journal article" date="2000" name="Nat. Cell Biol.">
        <title>The cell-polarity protein Par6 links Par3 and atypical protein kinase C to Cdc42.</title>
        <authorList>
            <person name="Joberty G."/>
            <person name="Petersen C."/>
            <person name="Gao L."/>
            <person name="Macara I.G."/>
        </authorList>
    </citation>
    <scope>INTERACTION WITH PARD6B</scope>
    <scope>SUBUNIT OF A COMPLEX CONTAINING PARD6B; PRKCI AND CDC42</scope>
</reference>
<reference key="6">
    <citation type="journal article" date="2001" name="EMBO J.">
        <title>The cell polarity protein ASIP/PAR-3 directly associates with junctional adhesion molecule (JAM).</title>
        <authorList>
            <person name="Ebnet K."/>
            <person name="Suzuki A."/>
            <person name="Horikoshi Y."/>
            <person name="Hirose T."/>
            <person name="Meyer zu Brickwedde M.-K."/>
            <person name="Ohno S."/>
            <person name="Vestweber D."/>
        </authorList>
    </citation>
    <scope>INTERACTION WITH F11R</scope>
</reference>
<reference key="7">
    <citation type="journal article" date="2002" name="Curr. Biol.">
        <title>Assembly of epithelial tight junctions is negatively regulated by Par6.</title>
        <authorList>
            <person name="Gao L."/>
            <person name="Joberty G."/>
            <person name="Macara I.G."/>
        </authorList>
    </citation>
    <scope>FUNCTION</scope>
    <scope>INTERACTION WITH F11R AND PARD6B</scope>
</reference>
<reference key="8">
    <citation type="journal article" date="2007" name="Proc. Natl. Acad. Sci. U.S.A.">
        <title>Large-scale phosphorylation analysis of mouse liver.</title>
        <authorList>
            <person name="Villen J."/>
            <person name="Beausoleil S.A."/>
            <person name="Gerber S.A."/>
            <person name="Gygi S.P."/>
        </authorList>
    </citation>
    <scope>IDENTIFICATION BY MASS SPECTROMETRY [LARGE SCALE ANALYSIS]</scope>
    <source>
        <tissue>Liver</tissue>
    </source>
</reference>
<reference key="9">
    <citation type="journal article" date="2010" name="Cell">
        <title>A tissue-specific atlas of mouse protein phosphorylation and expression.</title>
        <authorList>
            <person name="Huttlin E.L."/>
            <person name="Jedrychowski M.P."/>
            <person name="Elias J.E."/>
            <person name="Goswami T."/>
            <person name="Rad R."/>
            <person name="Beausoleil S.A."/>
            <person name="Villen J."/>
            <person name="Haas W."/>
            <person name="Sowa M.E."/>
            <person name="Gygi S.P."/>
        </authorList>
    </citation>
    <scope>PHOSPHORYLATION [LARGE SCALE ANALYSIS] AT SER-25; SER-156 AND SER-728</scope>
    <scope>IDENTIFICATION BY MASS SPECTROMETRY [LARGE SCALE ANALYSIS]</scope>
    <source>
        <tissue>Brain</tissue>
        <tissue>Brown adipose tissue</tissue>
        <tissue>Heart</tissue>
        <tissue>Kidney</tissue>
        <tissue>Liver</tissue>
        <tissue>Lung</tissue>
        <tissue>Spleen</tissue>
    </source>
</reference>
<reference key="10">
    <citation type="journal article" date="2010" name="EMBO J.">
        <title>The PHCCEx domain of Tiam1/2 is a novel protein- and membrane-binding module.</title>
        <authorList>
            <person name="Terawaki S."/>
            <person name="Kitano K."/>
            <person name="Mori T."/>
            <person name="Zhai Y."/>
            <person name="Higuchi Y."/>
            <person name="Itoh N."/>
            <person name="Watanabe T."/>
            <person name="Kaibuchi K."/>
            <person name="Hakoshima T."/>
        </authorList>
    </citation>
    <scope>INTERACTION WITH TIAM1 AND TIAM2</scope>
</reference>
<reference key="11">
    <citation type="journal article" date="2010" name="Proc. Natl. Acad. Sci. U.S.A.">
        <title>FRMD4A regulates epithelial polarity by connecting Arf6 activation with the PAR complex.</title>
        <authorList>
            <person name="Ikenouchi J."/>
            <person name="Umeda M."/>
        </authorList>
    </citation>
    <scope>SUBCELLULAR LOCATION</scope>
    <scope>INTERACTION WITH FRMD4A</scope>
    <scope>SUBUNIT</scope>
</reference>
<reference key="12">
    <citation type="journal article" date="2011" name="Proc. Natl. Acad. Sci. U.S.A.">
        <title>Sir-two-homolog 2 (Sirt2) modulates peripheral myelination through polarity protein Par-3/atypical protein kinase C (aPKC) signaling.</title>
        <authorList>
            <person name="Beirowski B."/>
            <person name="Gustin J."/>
            <person name="Armour S.M."/>
            <person name="Yamamoto H."/>
            <person name="Viader A."/>
            <person name="North B.J."/>
            <person name="Michan S."/>
            <person name="Baloh R.H."/>
            <person name="Golden J.P."/>
            <person name="Schmidt R.E."/>
            <person name="Sinclair D.A."/>
            <person name="Auwerx J."/>
            <person name="Milbrandt J."/>
        </authorList>
    </citation>
    <scope>FUNCTION IN REGULATION OF PERIPHERAL MYELINATION</scope>
    <scope>ACETYLATION AT LYS-831; LYS-848; LYS-881 AND LYS-1327</scope>
    <scope>DEACETYLATION BY SIRT2</scope>
    <scope>SUBCELLULAR LOCATION</scope>
    <scope>MUTAGENESIS OF LYS-831; LYS-848; LYS-881 AND LYS-1327</scope>
    <scope>MASS SPECTROMETRY</scope>
</reference>
<reference key="13">
    <citation type="journal article" date="2013" name="Hum. Mol. Genet.">
        <title>Loss of CRB2 in the mouse retina mimics human retinitis pigmentosa due to mutations in the CRB1 gene.</title>
        <authorList>
            <person name="Alves C.H."/>
            <person name="Sanz A.S."/>
            <person name="Park B."/>
            <person name="Pellissier L.P."/>
            <person name="Tanimoto N."/>
            <person name="Beck S.C."/>
            <person name="Huber G."/>
            <person name="Murtaza M."/>
            <person name="Richard F."/>
            <person name="Sridevi Gurubaran I."/>
            <person name="Garcia Garrido M."/>
            <person name="Levelt C.N."/>
            <person name="Rashbass P."/>
            <person name="Le Bivic A."/>
            <person name="Seeliger M.W."/>
            <person name="Wijnholds J."/>
        </authorList>
    </citation>
    <scope>DEVELOPMENTAL STAGE</scope>
</reference>
<reference key="14">
    <citation type="submission" date="2009-11" db="PDB data bank">
        <title>Macromolecular structure determination by NMR spectroscopy.</title>
        <authorList>
            <consortium name="Center for eukaryotic structural genomics (CESG)"/>
        </authorList>
    </citation>
    <scope>STRUCTURE BY NMR OF 448-558</scope>
</reference>
<reference key="15">
    <citation type="journal article" date="2010" name="Biochemistry">
        <title>Distal interactions within the par3-VE-cadherin complex.</title>
        <authorList>
            <person name="Tyler R.C."/>
            <person name="Peterson F.C."/>
            <person name="Volkman B.F."/>
        </authorList>
    </citation>
    <scope>STRUCTURE BY NMR OF 581-689 IN COMPLEX WITH CDH5 PEPTIDE</scope>
    <scope>SUBUNIT</scope>
</reference>
<dbReference type="EMBL" id="AY026057">
    <property type="protein sequence ID" value="AAK07669.1"/>
    <property type="molecule type" value="mRNA"/>
</dbReference>
<dbReference type="EMBL" id="AY856081">
    <property type="protein sequence ID" value="AAX48908.1"/>
    <property type="molecule type" value="mRNA"/>
</dbReference>
<dbReference type="EMBL" id="AY856082">
    <property type="protein sequence ID" value="AAX48909.1"/>
    <property type="molecule type" value="mRNA"/>
</dbReference>
<dbReference type="EMBL" id="AK037015">
    <property type="protein sequence ID" value="BAC29670.1"/>
    <property type="molecule type" value="mRNA"/>
</dbReference>
<dbReference type="CCDS" id="CCDS22788.1">
    <molecule id="Q99NH2-1"/>
</dbReference>
<dbReference type="CCDS" id="CCDS40523.1">
    <molecule id="Q99NH2-5"/>
</dbReference>
<dbReference type="RefSeq" id="NP_001013598.1">
    <molecule id="Q99NH2-5"/>
    <property type="nucleotide sequence ID" value="NM_001013580.4"/>
</dbReference>
<dbReference type="RefSeq" id="NP_001013599.1">
    <property type="nucleotide sequence ID" value="NM_001013581.2"/>
</dbReference>
<dbReference type="PDB" id="2KOH">
    <property type="method" value="NMR"/>
    <property type="chains" value="A=581-689"/>
</dbReference>
<dbReference type="PDB" id="2KOJ">
    <property type="method" value="NMR"/>
    <property type="chains" value="A=450-558"/>
</dbReference>
<dbReference type="PDBsum" id="2KOH"/>
<dbReference type="PDBsum" id="2KOJ"/>
<dbReference type="SMR" id="Q99NH2"/>
<dbReference type="BioGRID" id="220283">
    <property type="interactions" value="18"/>
</dbReference>
<dbReference type="CORUM" id="Q99NH2"/>
<dbReference type="DIP" id="DIP-41727N"/>
<dbReference type="ELM" id="Q99NH2"/>
<dbReference type="FunCoup" id="Q99NH2">
    <property type="interactions" value="1661"/>
</dbReference>
<dbReference type="IntAct" id="Q99NH2">
    <property type="interactions" value="14"/>
</dbReference>
<dbReference type="MINT" id="Q99NH2"/>
<dbReference type="STRING" id="10090.ENSMUSP00000125453"/>
<dbReference type="GlyGen" id="Q99NH2">
    <property type="glycosylation" value="1 site, 1 O-linked glycan (1 site)"/>
</dbReference>
<dbReference type="iPTMnet" id="Q99NH2"/>
<dbReference type="PhosphoSitePlus" id="Q99NH2"/>
<dbReference type="jPOST" id="Q99NH2"/>
<dbReference type="PaxDb" id="10090-ENSMUSP00000125453"/>
<dbReference type="PeptideAtlas" id="Q99NH2"/>
<dbReference type="ProteomicsDB" id="287774">
    <molecule id="Q99NH2-1"/>
</dbReference>
<dbReference type="ProteomicsDB" id="287775">
    <molecule id="Q99NH2-2"/>
</dbReference>
<dbReference type="ProteomicsDB" id="287776">
    <molecule id="Q99NH2-3"/>
</dbReference>
<dbReference type="ProteomicsDB" id="287777">
    <molecule id="Q99NH2-4"/>
</dbReference>
<dbReference type="ProteomicsDB" id="287778">
    <molecule id="Q99NH2-5"/>
</dbReference>
<dbReference type="Pumba" id="Q99NH2"/>
<dbReference type="Antibodypedia" id="26597">
    <property type="antibodies" value="259 antibodies from 35 providers"/>
</dbReference>
<dbReference type="DNASU" id="93742"/>
<dbReference type="Ensembl" id="ENSMUST00000108752.10">
    <molecule id="Q99NH2-5"/>
    <property type="protein sequence ID" value="ENSMUSP00000104383.4"/>
    <property type="gene ID" value="ENSMUSG00000025812.19"/>
</dbReference>
<dbReference type="Ensembl" id="ENSMUST00000160717.8">
    <molecule id="Q99NH2-5"/>
    <property type="protein sequence ID" value="ENSMUSP00000125612.2"/>
    <property type="gene ID" value="ENSMUSG00000025812.19"/>
</dbReference>
<dbReference type="GeneID" id="93742"/>
<dbReference type="KEGG" id="mmu:93742"/>
<dbReference type="UCSC" id="uc009nzk.2">
    <molecule id="Q99NH2-5"/>
    <property type="organism name" value="mouse"/>
</dbReference>
<dbReference type="AGR" id="MGI:2135608"/>
<dbReference type="CTD" id="56288"/>
<dbReference type="MGI" id="MGI:2135608">
    <property type="gene designation" value="Pard3"/>
</dbReference>
<dbReference type="VEuPathDB" id="HostDB:ENSMUSG00000025812"/>
<dbReference type="eggNOG" id="KOG3528">
    <property type="taxonomic scope" value="Eukaryota"/>
</dbReference>
<dbReference type="GeneTree" id="ENSGT00950000183214"/>
<dbReference type="InParanoid" id="Q99NH2"/>
<dbReference type="OrthoDB" id="6264899at2759"/>
<dbReference type="Reactome" id="R-MMU-2173791">
    <property type="pathway name" value="TGF-beta receptor signaling in EMT (epithelial to mesenchymal transition)"/>
</dbReference>
<dbReference type="Reactome" id="R-MMU-420029">
    <property type="pathway name" value="Tight junction interactions"/>
</dbReference>
<dbReference type="BioGRID-ORCS" id="93742">
    <property type="hits" value="3 hits in 77 CRISPR screens"/>
</dbReference>
<dbReference type="CD-CODE" id="01CA17F3">
    <property type="entry name" value="Centrosome"/>
</dbReference>
<dbReference type="ChiTaRS" id="Pard3">
    <property type="organism name" value="mouse"/>
</dbReference>
<dbReference type="EvolutionaryTrace" id="Q99NH2"/>
<dbReference type="PRO" id="PR:Q99NH2"/>
<dbReference type="Proteomes" id="UP000000589">
    <property type="component" value="Chromosome 8"/>
</dbReference>
<dbReference type="RNAct" id="Q99NH2">
    <property type="molecule type" value="protein"/>
</dbReference>
<dbReference type="Bgee" id="ENSMUSG00000025812">
    <property type="expression patterns" value="Expressed in esophagus and 254 other cell types or tissues"/>
</dbReference>
<dbReference type="ExpressionAtlas" id="Q99NH2">
    <property type="expression patterns" value="baseline and differential"/>
</dbReference>
<dbReference type="GO" id="GO:0005912">
    <property type="term" value="C:adherens junction"/>
    <property type="evidence" value="ECO:0000314"/>
    <property type="project" value="MGI"/>
</dbReference>
<dbReference type="GO" id="GO:0043296">
    <property type="term" value="C:apical junction complex"/>
    <property type="evidence" value="ECO:0000314"/>
    <property type="project" value="MGI"/>
</dbReference>
<dbReference type="GO" id="GO:0005923">
    <property type="term" value="C:bicellular tight junction"/>
    <property type="evidence" value="ECO:0000314"/>
    <property type="project" value="UniProtKB"/>
</dbReference>
<dbReference type="GO" id="GO:0005938">
    <property type="term" value="C:cell cortex"/>
    <property type="evidence" value="ECO:0000314"/>
    <property type="project" value="MGI"/>
</dbReference>
<dbReference type="GO" id="GO:0030054">
    <property type="term" value="C:cell junction"/>
    <property type="evidence" value="ECO:0000314"/>
    <property type="project" value="MGI"/>
</dbReference>
<dbReference type="GO" id="GO:0005911">
    <property type="term" value="C:cell-cell junction"/>
    <property type="evidence" value="ECO:0000314"/>
    <property type="project" value="MGI"/>
</dbReference>
<dbReference type="GO" id="GO:0005737">
    <property type="term" value="C:cytoplasm"/>
    <property type="evidence" value="ECO:0000314"/>
    <property type="project" value="MGI"/>
</dbReference>
<dbReference type="GO" id="GO:0012505">
    <property type="term" value="C:endomembrane system"/>
    <property type="evidence" value="ECO:0007669"/>
    <property type="project" value="UniProtKB-SubCell"/>
</dbReference>
<dbReference type="GO" id="GO:0033269">
    <property type="term" value="C:internode region of axon"/>
    <property type="evidence" value="ECO:0000314"/>
    <property type="project" value="UniProtKB"/>
</dbReference>
<dbReference type="GO" id="GO:0043219">
    <property type="term" value="C:lateral loop"/>
    <property type="evidence" value="ECO:0000314"/>
    <property type="project" value="BHF-UCL"/>
</dbReference>
<dbReference type="GO" id="GO:0005886">
    <property type="term" value="C:plasma membrane"/>
    <property type="evidence" value="ECO:0007669"/>
    <property type="project" value="UniProtKB-SubCell"/>
</dbReference>
<dbReference type="GO" id="GO:0043220">
    <property type="term" value="C:Schmidt-Lanterman incisure"/>
    <property type="evidence" value="ECO:0000314"/>
    <property type="project" value="BHF-UCL"/>
</dbReference>
<dbReference type="GO" id="GO:0005819">
    <property type="term" value="C:spindle"/>
    <property type="evidence" value="ECO:0000314"/>
    <property type="project" value="MGI"/>
</dbReference>
<dbReference type="GO" id="GO:0005547">
    <property type="term" value="F:phosphatidylinositol-3,4,5-trisphosphate binding"/>
    <property type="evidence" value="ECO:0000250"/>
    <property type="project" value="UniProtKB"/>
</dbReference>
<dbReference type="GO" id="GO:0032266">
    <property type="term" value="F:phosphatidylinositol-3-phosphate binding"/>
    <property type="evidence" value="ECO:0000250"/>
    <property type="project" value="UniProtKB"/>
</dbReference>
<dbReference type="GO" id="GO:0005546">
    <property type="term" value="F:phosphatidylinositol-4,5-bisphosphate binding"/>
    <property type="evidence" value="ECO:0000250"/>
    <property type="project" value="UniProtKB"/>
</dbReference>
<dbReference type="GO" id="GO:0003383">
    <property type="term" value="P:apical constriction"/>
    <property type="evidence" value="ECO:0000316"/>
    <property type="project" value="MGI"/>
</dbReference>
<dbReference type="GO" id="GO:0070830">
    <property type="term" value="P:bicellular tight junction assembly"/>
    <property type="evidence" value="ECO:0000250"/>
    <property type="project" value="UniProtKB"/>
</dbReference>
<dbReference type="GO" id="GO:0051301">
    <property type="term" value="P:cell division"/>
    <property type="evidence" value="ECO:0007669"/>
    <property type="project" value="UniProtKB-KW"/>
</dbReference>
<dbReference type="GO" id="GO:0098609">
    <property type="term" value="P:cell-cell adhesion"/>
    <property type="evidence" value="ECO:0000305"/>
    <property type="project" value="MGI"/>
</dbReference>
<dbReference type="GO" id="GO:0051642">
    <property type="term" value="P:centrosome localization"/>
    <property type="evidence" value="ECO:0000315"/>
    <property type="project" value="MGI"/>
</dbReference>
<dbReference type="GO" id="GO:0090162">
    <property type="term" value="P:establishment of epithelial cell polarity"/>
    <property type="evidence" value="ECO:0000250"/>
    <property type="project" value="UniProtKB"/>
</dbReference>
<dbReference type="GO" id="GO:0007163">
    <property type="term" value="P:establishment or maintenance of cell polarity"/>
    <property type="evidence" value="ECO:0000304"/>
    <property type="project" value="UniProtKB"/>
</dbReference>
<dbReference type="GO" id="GO:0000226">
    <property type="term" value="P:microtubule cytoskeleton organization"/>
    <property type="evidence" value="ECO:0000315"/>
    <property type="project" value="MGI"/>
</dbReference>
<dbReference type="GO" id="GO:0022011">
    <property type="term" value="P:myelination in peripheral nervous system"/>
    <property type="evidence" value="ECO:0000315"/>
    <property type="project" value="UniProtKB"/>
</dbReference>
<dbReference type="GO" id="GO:0010801">
    <property type="term" value="P:negative regulation of peptidyl-threonine phosphorylation"/>
    <property type="evidence" value="ECO:0000315"/>
    <property type="project" value="UniProtKB"/>
</dbReference>
<dbReference type="GO" id="GO:0031643">
    <property type="term" value="P:positive regulation of myelination"/>
    <property type="evidence" value="ECO:0000315"/>
    <property type="project" value="UniProtKB"/>
</dbReference>
<dbReference type="GO" id="GO:0002092">
    <property type="term" value="P:positive regulation of receptor internalization"/>
    <property type="evidence" value="ECO:0000315"/>
    <property type="project" value="CACAO"/>
</dbReference>
<dbReference type="GO" id="GO:0006612">
    <property type="term" value="P:protein targeting to membrane"/>
    <property type="evidence" value="ECO:0000250"/>
    <property type="project" value="UniProtKB"/>
</dbReference>
<dbReference type="GO" id="GO:0032970">
    <property type="term" value="P:regulation of actin filament-based process"/>
    <property type="evidence" value="ECO:0000316"/>
    <property type="project" value="MGI"/>
</dbReference>
<dbReference type="GO" id="GO:0044319">
    <property type="term" value="P:wound healing, spreading of cells"/>
    <property type="evidence" value="ECO:0000315"/>
    <property type="project" value="MGI"/>
</dbReference>
<dbReference type="CDD" id="cd06691">
    <property type="entry name" value="PDZ1_Par3-like"/>
    <property type="match status" value="1"/>
</dbReference>
<dbReference type="CDD" id="cd23058">
    <property type="entry name" value="PDZ2_Par3-like"/>
    <property type="match status" value="1"/>
</dbReference>
<dbReference type="CDD" id="cd23059">
    <property type="entry name" value="PDZ3_Par3-like"/>
    <property type="match status" value="1"/>
</dbReference>
<dbReference type="FunFam" id="2.30.42.10:FF:000078">
    <property type="entry name" value="Partitioning defective 3 homolog B"/>
    <property type="match status" value="1"/>
</dbReference>
<dbReference type="FunFam" id="2.30.42.10:FF:000011">
    <property type="entry name" value="partitioning defective 3 homolog isoform X1"/>
    <property type="match status" value="1"/>
</dbReference>
<dbReference type="FunFam" id="2.30.42.10:FF:000040">
    <property type="entry name" value="partitioning defective 3 homolog isoform X2"/>
    <property type="match status" value="1"/>
</dbReference>
<dbReference type="FunFam" id="3.10.20.90:FF:000017">
    <property type="entry name" value="partitioning defective 3 homolog isoform X2"/>
    <property type="match status" value="1"/>
</dbReference>
<dbReference type="Gene3D" id="2.30.42.10">
    <property type="match status" value="3"/>
</dbReference>
<dbReference type="Gene3D" id="3.10.20.90">
    <property type="entry name" value="Phosphatidylinositol 3-kinase Catalytic Subunit, Chain A, domain 1"/>
    <property type="match status" value="1"/>
</dbReference>
<dbReference type="InterPro" id="IPR052213">
    <property type="entry name" value="PAR3"/>
</dbReference>
<dbReference type="InterPro" id="IPR021922">
    <property type="entry name" value="Par3/HAL_N"/>
</dbReference>
<dbReference type="InterPro" id="IPR001478">
    <property type="entry name" value="PDZ"/>
</dbReference>
<dbReference type="InterPro" id="IPR036034">
    <property type="entry name" value="PDZ_sf"/>
</dbReference>
<dbReference type="PANTHER" id="PTHR16484:SF10">
    <property type="entry name" value="PARTITIONING DEFECTIVE 3 HOMOLOG"/>
    <property type="match status" value="1"/>
</dbReference>
<dbReference type="PANTHER" id="PTHR16484">
    <property type="entry name" value="PARTITIONING DEFECTIVE 3 RELATED"/>
    <property type="match status" value="1"/>
</dbReference>
<dbReference type="Pfam" id="PF12053">
    <property type="entry name" value="Par3_HAL_N_term"/>
    <property type="match status" value="1"/>
</dbReference>
<dbReference type="Pfam" id="PF00595">
    <property type="entry name" value="PDZ"/>
    <property type="match status" value="3"/>
</dbReference>
<dbReference type="SMART" id="SM00228">
    <property type="entry name" value="PDZ"/>
    <property type="match status" value="3"/>
</dbReference>
<dbReference type="SUPFAM" id="SSF50156">
    <property type="entry name" value="PDZ domain-like"/>
    <property type="match status" value="3"/>
</dbReference>
<dbReference type="PROSITE" id="PS50106">
    <property type="entry name" value="PDZ"/>
    <property type="match status" value="3"/>
</dbReference>
<organism>
    <name type="scientific">Mus musculus</name>
    <name type="common">Mouse</name>
    <dbReference type="NCBI Taxonomy" id="10090"/>
    <lineage>
        <taxon>Eukaryota</taxon>
        <taxon>Metazoa</taxon>
        <taxon>Chordata</taxon>
        <taxon>Craniata</taxon>
        <taxon>Vertebrata</taxon>
        <taxon>Euteleostomi</taxon>
        <taxon>Mammalia</taxon>
        <taxon>Eutheria</taxon>
        <taxon>Euarchontoglires</taxon>
        <taxon>Glires</taxon>
        <taxon>Rodentia</taxon>
        <taxon>Myomorpha</taxon>
        <taxon>Muroidea</taxon>
        <taxon>Muridae</taxon>
        <taxon>Murinae</taxon>
        <taxon>Mus</taxon>
        <taxon>Mus</taxon>
    </lineage>
</organism>
<accession>Q99NH2</accession>
<accession>Q58T10</accession>
<accession>Q58T11</accession>
<accession>Q8CB21</accession>
<feature type="chain" id="PRO_0000185070" description="Partitioning defective 3 homolog">
    <location>
        <begin position="1"/>
        <end position="1333"/>
    </location>
</feature>
<feature type="domain" description="PDZ 1" evidence="5">
    <location>
        <begin position="271"/>
        <end position="359"/>
    </location>
</feature>
<feature type="domain" description="PDZ 2" evidence="5">
    <location>
        <begin position="461"/>
        <end position="546"/>
    </location>
</feature>
<feature type="domain" description="PDZ 3" evidence="5">
    <location>
        <begin position="590"/>
        <end position="677"/>
    </location>
</feature>
<feature type="region of interest" description="Disordered" evidence="6">
    <location>
        <begin position="143"/>
        <end position="262"/>
    </location>
</feature>
<feature type="region of interest" description="Disordered" evidence="6">
    <location>
        <begin position="369"/>
        <end position="388"/>
    </location>
</feature>
<feature type="region of interest" description="Disordered" evidence="6">
    <location>
        <begin position="397"/>
        <end position="441"/>
    </location>
</feature>
<feature type="region of interest" description="Interaction with PRKCI and PRKCZ" evidence="1">
    <location>
        <begin position="712"/>
        <end position="936"/>
    </location>
</feature>
<feature type="region of interest" description="Interaction with PRKCI and PRKCZ" evidence="3">
    <location>
        <begin position="712"/>
        <end position="932"/>
    </location>
</feature>
<feature type="region of interest" description="Disordered" evidence="6">
    <location>
        <begin position="861"/>
        <end position="884"/>
    </location>
</feature>
<feature type="region of interest" description="Disordered" evidence="6">
    <location>
        <begin position="928"/>
        <end position="1011"/>
    </location>
</feature>
<feature type="region of interest" description="Interaction with FRMD4A" evidence="14">
    <location>
        <begin position="931"/>
        <end position="1333"/>
    </location>
</feature>
<feature type="region of interest" description="Disordered" evidence="6">
    <location>
        <begin position="1024"/>
        <end position="1071"/>
    </location>
</feature>
<feature type="region of interest" description="Disordered" evidence="6">
    <location>
        <begin position="1110"/>
        <end position="1267"/>
    </location>
</feature>
<feature type="region of interest" description="Disordered" evidence="6">
    <location>
        <begin position="1283"/>
        <end position="1333"/>
    </location>
</feature>
<feature type="coiled-coil region" evidence="4">
    <location>
        <begin position="1046"/>
        <end position="1078"/>
    </location>
</feature>
<feature type="coiled-coil region" evidence="4">
    <location>
        <begin position="1145"/>
        <end position="1168"/>
    </location>
</feature>
<feature type="coiled-coil region" evidence="4">
    <location>
        <begin position="1195"/>
        <end position="1218"/>
    </location>
</feature>
<feature type="coiled-coil region" evidence="4">
    <location>
        <begin position="1274"/>
        <end position="1295"/>
    </location>
</feature>
<feature type="compositionally biased region" description="Polar residues" evidence="6">
    <location>
        <begin position="150"/>
        <end position="163"/>
    </location>
</feature>
<feature type="compositionally biased region" description="Polar residues" evidence="6">
    <location>
        <begin position="171"/>
        <end position="187"/>
    </location>
</feature>
<feature type="compositionally biased region" description="Basic and acidic residues" evidence="6">
    <location>
        <begin position="190"/>
        <end position="203"/>
    </location>
</feature>
<feature type="compositionally biased region" description="Polar residues" evidence="6">
    <location>
        <begin position="207"/>
        <end position="224"/>
    </location>
</feature>
<feature type="compositionally biased region" description="Acidic residues" evidence="6">
    <location>
        <begin position="935"/>
        <end position="949"/>
    </location>
</feature>
<feature type="compositionally biased region" description="Basic and acidic residues" evidence="6">
    <location>
        <begin position="977"/>
        <end position="1005"/>
    </location>
</feature>
<feature type="compositionally biased region" description="Basic and acidic residues" evidence="6">
    <location>
        <begin position="1026"/>
        <end position="1039"/>
    </location>
</feature>
<feature type="compositionally biased region" description="Basic and acidic residues" evidence="6">
    <location>
        <begin position="1046"/>
        <end position="1071"/>
    </location>
</feature>
<feature type="compositionally biased region" description="Polar residues" evidence="6">
    <location>
        <begin position="1134"/>
        <end position="1143"/>
    </location>
</feature>
<feature type="compositionally biased region" description="Basic and acidic residues" evidence="6">
    <location>
        <begin position="1144"/>
        <end position="1171"/>
    </location>
</feature>
<feature type="compositionally biased region" description="Low complexity" evidence="6">
    <location>
        <begin position="1176"/>
        <end position="1199"/>
    </location>
</feature>
<feature type="compositionally biased region" description="Polar residues" evidence="6">
    <location>
        <begin position="1215"/>
        <end position="1236"/>
    </location>
</feature>
<feature type="compositionally biased region" description="Basic and acidic residues" evidence="6">
    <location>
        <begin position="1283"/>
        <end position="1292"/>
    </location>
</feature>
<feature type="compositionally biased region" description="Polar residues" evidence="6">
    <location>
        <begin position="1314"/>
        <end position="1323"/>
    </location>
</feature>
<feature type="compositionally biased region" description="Basic and acidic residues" evidence="6">
    <location>
        <begin position="1324"/>
        <end position="1333"/>
    </location>
</feature>
<feature type="modified residue" description="Phosphoserine" evidence="21">
    <location>
        <position position="25"/>
    </location>
</feature>
<feature type="modified residue" description="Phosphothreonine" evidence="2">
    <location>
        <position position="91"/>
    </location>
</feature>
<feature type="modified residue" description="Phosphoserine" evidence="21">
    <location>
        <position position="156"/>
    </location>
</feature>
<feature type="modified residue" description="Phosphoserine" evidence="2">
    <location>
        <position position="174"/>
    </location>
</feature>
<feature type="modified residue" description="Phosphoserine" evidence="2">
    <location>
        <position position="383"/>
    </location>
</feature>
<feature type="modified residue" description="Phosphotyrosine" evidence="2">
    <location>
        <position position="489"/>
    </location>
</feature>
<feature type="modified residue" description="Phosphoserine" evidence="2">
    <location>
        <position position="692"/>
    </location>
</feature>
<feature type="modified residue" description="Phosphoserine" evidence="2">
    <location>
        <position position="695"/>
    </location>
</feature>
<feature type="modified residue" description="Phosphoserine" evidence="2">
    <location>
        <position position="715"/>
    </location>
</feature>
<feature type="modified residue" description="Phosphoserine" evidence="21">
    <location>
        <position position="728"/>
    </location>
</feature>
<feature type="modified residue" description="Phosphoserine" evidence="2">
    <location>
        <position position="806"/>
    </location>
</feature>
<feature type="modified residue" description="Phosphoserine" evidence="2">
    <location>
        <position position="824"/>
    </location>
</feature>
<feature type="modified residue" description="N6-acetyllysine" evidence="15">
    <location>
        <position position="831"/>
    </location>
</feature>
<feature type="modified residue" description="Phosphoserine" evidence="2">
    <location>
        <position position="834"/>
    </location>
</feature>
<feature type="modified residue" description="N6-acetyllysine" evidence="15">
    <location>
        <position position="848"/>
    </location>
</feature>
<feature type="modified residue" description="Phosphoserine" evidence="2">
    <location>
        <position position="849"/>
    </location>
</feature>
<feature type="modified residue" description="Phosphoserine" evidence="2">
    <location>
        <position position="869"/>
    </location>
</feature>
<feature type="modified residue" description="N6-acetyllysine" evidence="15">
    <location>
        <position position="881"/>
    </location>
</feature>
<feature type="modified residue" description="Phosphoserine; by AURKA" evidence="2">
    <location>
        <position position="958"/>
    </location>
</feature>
<feature type="modified residue" description="Phosphoserine" evidence="2">
    <location>
        <position position="967"/>
    </location>
</feature>
<feature type="modified residue" description="Phosphoserine" evidence="2">
    <location>
        <position position="969"/>
    </location>
</feature>
<feature type="modified residue" description="Phosphoserine" evidence="2">
    <location>
        <position position="1042"/>
    </location>
</feature>
<feature type="modified residue" description="N6-acetyllysine" evidence="15">
    <location>
        <position position="1327"/>
    </location>
</feature>
<feature type="splice variant" id="VSP_035895" description="In isoform 4 and isoform 5." evidence="18">
    <location>
        <begin position="1"/>
        <end position="135"/>
    </location>
</feature>
<feature type="splice variant" id="VSP_007472" description="In isoform 3." evidence="17 19">
    <original>KCQL</original>
    <variation>ESGT</variation>
    <location>
        <begin position="741"/>
        <end position="744"/>
    </location>
</feature>
<feature type="splice variant" id="VSP_035896" description="In isoform 5." evidence="18">
    <original>K</original>
    <variation>T</variation>
    <location>
        <position position="741"/>
    </location>
</feature>
<feature type="splice variant" id="VSP_035897" description="In isoform 5." evidence="18">
    <location>
        <begin position="742"/>
        <end position="1333"/>
    </location>
</feature>
<feature type="splice variant" id="VSP_007473" description="In isoform 3." evidence="17 19">
    <location>
        <begin position="745"/>
        <end position="1333"/>
    </location>
</feature>
<feature type="splice variant" id="VSP_035898" description="In isoform 4." evidence="18">
    <original>RFGKHRKDDK</original>
    <variation>SLAKLKPEKR</variation>
    <location>
        <begin position="1021"/>
        <end position="1030"/>
    </location>
</feature>
<feature type="splice variant" id="VSP_007474" description="In isoform 2." evidence="17">
    <location>
        <begin position="1030"/>
        <end position="1333"/>
    </location>
</feature>
<feature type="splice variant" id="VSP_035899" description="In isoform 4." evidence="18">
    <location>
        <begin position="1031"/>
        <end position="1333"/>
    </location>
</feature>
<feature type="mutagenesis site" description="Strongly reduces phosphorylation by PRKCZ and abolishes interaction with PKRCI." evidence="8">
    <original>SMS</original>
    <variation>AMA</variation>
    <variation>EME</variation>
    <location>
        <begin position="824"/>
        <end position="826"/>
    </location>
</feature>
<feature type="mutagenesis site" description="Inhibits Schwann cell peripheral myelination; when associated with A-848; A-881 and A-1327." evidence="15">
    <original>K</original>
    <variation>A</variation>
    <location>
        <position position="831"/>
    </location>
</feature>
<feature type="mutagenesis site" description="Inhibits Schwann cell peripheral myelination; when associated with A-831; A-881 and A-1327." evidence="15">
    <original>K</original>
    <variation>A</variation>
    <location>
        <position position="848"/>
    </location>
</feature>
<feature type="mutagenesis site" description="Inhibits Schwann cell peripheral myelination; when associated with A-831; A-848 and A-1327." evidence="15">
    <original>K</original>
    <variation>A</variation>
    <location>
        <position position="881"/>
    </location>
</feature>
<feature type="mutagenesis site" description="Inhibits Schwann cell peripheral myelination; when associated with A-831; A-848 and A-881." evidence="15">
    <original>K</original>
    <variation>A</variation>
    <location>
        <position position="1327"/>
    </location>
</feature>
<feature type="sequence conflict" description="In Ref. 4; BAC29670." evidence="20" ref="4">
    <original>S</original>
    <variation>C</variation>
    <location>
        <position position="477"/>
    </location>
</feature>
<feature type="sequence conflict" description="In Ref. 3; AAX48909." evidence="20" ref="3">
    <original>V</original>
    <variation>GI</variation>
    <location>
        <position position="853"/>
    </location>
</feature>
<feature type="sequence conflict" description="In Ref. 2; AAK07669." evidence="20" ref="2">
    <original>K</original>
    <variation>N</variation>
    <location>
        <position position="1009"/>
    </location>
</feature>
<feature type="strand" evidence="23">
    <location>
        <begin position="454"/>
        <end position="456"/>
    </location>
</feature>
<feature type="strand" evidence="23">
    <location>
        <begin position="458"/>
        <end position="465"/>
    </location>
</feature>
<feature type="strand" evidence="23">
    <location>
        <begin position="473"/>
        <end position="477"/>
    </location>
</feature>
<feature type="strand" evidence="23">
    <location>
        <begin position="481"/>
        <end position="486"/>
    </location>
</feature>
<feature type="strand" evidence="23">
    <location>
        <begin position="488"/>
        <end position="493"/>
    </location>
</feature>
<feature type="strand" evidence="23">
    <location>
        <begin position="495"/>
        <end position="497"/>
    </location>
</feature>
<feature type="helix" evidence="23">
    <location>
        <begin position="498"/>
        <end position="502"/>
    </location>
</feature>
<feature type="strand" evidence="23">
    <location>
        <begin position="510"/>
        <end position="514"/>
    </location>
</feature>
<feature type="helix" evidence="23">
    <location>
        <begin position="524"/>
        <end position="533"/>
    </location>
</feature>
<feature type="strand" evidence="23">
    <location>
        <begin position="537"/>
        <end position="546"/>
    </location>
</feature>
<feature type="strand" evidence="22">
    <location>
        <begin position="584"/>
        <end position="595"/>
    </location>
</feature>
<feature type="strand" evidence="22">
    <location>
        <begin position="597"/>
        <end position="610"/>
    </location>
</feature>
<feature type="turn" evidence="22">
    <location>
        <begin position="611"/>
        <end position="614"/>
    </location>
</feature>
<feature type="strand" evidence="22">
    <location>
        <begin position="615"/>
        <end position="624"/>
    </location>
</feature>
<feature type="strand" evidence="22">
    <location>
        <begin position="626"/>
        <end position="628"/>
    </location>
</feature>
<feature type="helix" evidence="22">
    <location>
        <begin position="629"/>
        <end position="632"/>
    </location>
</feature>
<feature type="strand" evidence="22">
    <location>
        <begin position="641"/>
        <end position="645"/>
    </location>
</feature>
<feature type="helix" evidence="22">
    <location>
        <begin position="655"/>
        <end position="668"/>
    </location>
</feature>
<feature type="helix" evidence="22">
    <location>
        <begin position="670"/>
        <end position="673"/>
    </location>
</feature>
<feature type="strand" evidence="22">
    <location>
        <begin position="674"/>
        <end position="683"/>
    </location>
</feature>
<feature type="strand" evidence="22">
    <location>
        <begin position="685"/>
        <end position="687"/>
    </location>
</feature>
<gene>
    <name type="primary">Pard3</name>
    <name type="synonym">Par3</name>
</gene>
<keyword id="KW-0002">3D-structure</keyword>
<keyword id="KW-0007">Acetylation</keyword>
<keyword id="KW-0025">Alternative splicing</keyword>
<keyword id="KW-0131">Cell cycle</keyword>
<keyword id="KW-0132">Cell division</keyword>
<keyword id="KW-0965">Cell junction</keyword>
<keyword id="KW-1003">Cell membrane</keyword>
<keyword id="KW-0175">Coiled coil</keyword>
<keyword id="KW-0963">Cytoplasm</keyword>
<keyword id="KW-0206">Cytoskeleton</keyword>
<keyword id="KW-0221">Differentiation</keyword>
<keyword id="KW-0446">Lipid-binding</keyword>
<keyword id="KW-0472">Membrane</keyword>
<keyword id="KW-0597">Phosphoprotein</keyword>
<keyword id="KW-1185">Reference proteome</keyword>
<keyword id="KW-0677">Repeat</keyword>
<keyword id="KW-0796">Tight junction</keyword>
<proteinExistence type="evidence at protein level"/>
<protein>
    <recommendedName>
        <fullName>Partitioning defective 3 homolog</fullName>
        <shortName>PAR-3</shortName>
        <shortName>PARD-3</shortName>
    </recommendedName>
    <alternativeName>
        <fullName>Atypical PKC isotype-specific-interacting protein</fullName>
        <shortName>ASIP</shortName>
    </alternativeName>
    <alternativeName>
        <fullName>Ephrin-interacting protein</fullName>
        <shortName>PHIP</shortName>
    </alternativeName>
</protein>
<comment type="function">
    <text evidence="2 3 10 15">Adapter protein involved in asymmetrical cell division and cell polarization processes (By similarity). Seems to play a central role in the formation of epithelial tight junctions (By similarity). Targets the phosphatase PTEN to cell junctions (By similarity). Association with PARD6B may prevent the interaction of PARD3 with F11R/JAM1, thereby preventing tight junction assembly (PubMed:11839275). The PARD6-PARD3 complex links GTP-bound Rho small GTPases to atypical protein kinase C proteins (By similarity). Required for establishment of neuronal polarity and normal axon formation in cultured hippocampal neurons (By similarity). Involved in Schwann cell peripheral myelination (PubMed:21949390).</text>
</comment>
<comment type="subunit">
    <text evidence="1 2 7 8 9 10 12 13 14">Interacts with PRCKI and CDH5. Interacts (via PDZ 3 domain) with PTEN (via C-terminus). Component of a complex whose core is composed of ARHGAP17, AMOT, PALS1, PATJ and PARD3/PAR3. Interacts with LIMK2, AURKA and AURKB. Component of the Par polarity complex, composed of at least phosphorylated PRKCZ, PARD3 and TIAM1. Interacts with ECT2 and FBF1 (By similarity). Interacts (via PDZ 1 domain) with F11R/JAM1, PARD6A and PARD6B. Part of a complex with PARD6A or PARD6B, PRKCI or PRKCZ and CDC42 or RAC1. Directly interacts with TIAM1 and TIAM2. Interacts with SIRT2. Interacts (via coiled-coil domain) with FRMD4A (PubMed:20080746). Found in a complex with PARD3, CYTH1 and FRMD4A (PubMed:20080746). Interacts with SAPCD2 (By similarity). Interacts with PRKCA (By similarity).</text>
</comment>
<comment type="subunit">
    <molecule>Isoform 2</molecule>
    <text evidence="8">Interacts with PRKCZ.</text>
</comment>
<comment type="interaction">
    <interactant intactId="EBI-15946047">
        <id>Q99NH2-1</id>
    </interactant>
    <interactant intactId="EBI-1391846">
        <id>P98078</id>
        <label>Dab2</label>
    </interactant>
    <organismsDiffer>false</organismsDiffer>
    <experiments>2</experiments>
</comment>
<comment type="interaction">
    <interactant intactId="EBI-15946047">
        <id>Q99NH2-1</id>
    </interactant>
    <interactant intactId="EBI-7845747">
        <id>P35917</id>
        <label>Flt4</label>
    </interactant>
    <organismsDiffer>false</organismsDiffer>
    <experiments>3</experiments>
</comment>
<comment type="interaction">
    <interactant intactId="EBI-15946047">
        <id>Q99NH2-1</id>
    </interactant>
    <interactant intactId="EBI-15622277">
        <id>Q8R1S4</id>
        <label>Mtss1</label>
    </interactant>
    <organismsDiffer>false</organismsDiffer>
    <experiments>2</experiments>
</comment>
<comment type="subcellular location">
    <subcellularLocation>
        <location>Cytoplasm</location>
    </subcellularLocation>
    <subcellularLocation>
        <location>Endomembrane system</location>
    </subcellularLocation>
    <subcellularLocation>
        <location>Cell junction</location>
    </subcellularLocation>
    <subcellularLocation>
        <location evidence="8 14">Cell junction</location>
        <location evidence="8 14">Tight junction</location>
    </subcellularLocation>
    <subcellularLocation>
        <location evidence="14">Cell junction</location>
        <location evidence="14">Adherens junction</location>
    </subcellularLocation>
    <subcellularLocation>
        <location>Cytoplasm</location>
        <location>Cell cortex</location>
    </subcellularLocation>
    <subcellularLocation>
        <location>Cytoplasm</location>
        <location>Cytoskeleton</location>
    </subcellularLocation>
    <subcellularLocation>
        <location evidence="1">Cell membrane</location>
    </subcellularLocation>
    <text evidence="1">Localized along the cell-cell contact region. Colocalizes with PARD6A and PRKCI at epithelial tight junctions. Colocalizes with the cortical actin that overlays the meiotic spindle during metaphase I and metaphase II. Presence of KRIT1, CDH5 and RAP1B is required for its localization to the cell junction (By similarity). Colocalized with SIRT2 in internode region of myelin sheath.</text>
</comment>
<comment type="alternative products">
    <event type="alternative splicing"/>
    <isoform>
        <id>Q99NH2-1</id>
        <name>1</name>
        <name>180 kDa</name>
        <sequence type="displayed"/>
    </isoform>
    <isoform>
        <id>Q99NH2-2</id>
        <name>2</name>
        <name>150 kDa</name>
        <sequence type="described" ref="VSP_007474"/>
    </isoform>
    <isoform>
        <id>Q99NH2-3</id>
        <name>3</name>
        <name>100 kDa</name>
        <sequence type="described" ref="VSP_007472 VSP_007473"/>
    </isoform>
    <isoform>
        <id>Q99NH2-4</id>
        <name>4</name>
        <name>PAR-3o1</name>
        <name>Partitioning defective 3 oocyte form 1</name>
        <sequence type="described" ref="VSP_035895 VSP_035898 VSP_035899"/>
    </isoform>
    <isoform>
        <id>Q99NH2-5</id>
        <name>5</name>
        <name>PAR-3o2</name>
        <name>Partitioning defective 3 oocyte form 2</name>
        <sequence type="described" ref="VSP_035895 VSP_035896 VSP_035897"/>
    </isoform>
</comment>
<comment type="tissue specificity">
    <text>All isoforms are expressed in heart, while expression in brain is mainly limited to isoform 1, and to isoform 3 to a weaker level.</text>
</comment>
<comment type="developmental stage">
    <text evidence="16">Expressed at the outer limiting membrane of the retina at 3 months of age.</text>
</comment>
<comment type="developmental stage">
    <molecule>Isoform 2</molecule>
    <text evidence="11">Not expressed in the oocyte.</text>
</comment>
<comment type="developmental stage">
    <molecule>Isoform 1</molecule>
    <text evidence="11">Expressed in the oocyte from 9.5 dpc to 14.5 dpc.</text>
</comment>
<comment type="developmental stage">
    <molecule>Isoform 3</molecule>
    <text evidence="11">Expressed in the oocyte from 9.5 dpc to 14.5 dpc.</text>
</comment>
<comment type="developmental stage">
    <molecule>Isoform 4</molecule>
    <text evidence="11">Expression increases steadily throughout oocyte maturation.</text>
</comment>
<comment type="developmental stage">
    <molecule>Isoform 5</molecule>
    <text evidence="11">Expression decreases in the egg as compared to the oocyte.</text>
</comment>
<comment type="domain">
    <text evidence="1">Contains a conserved N-terminal oligomerization domain (NTD) that is involved in oligomerization and is essential for proper subapical membrane localization.</text>
</comment>
<comment type="domain">
    <text evidence="1">The second PDZ domain mediates interaction with membranes containing phosphoinositol lipids.</text>
</comment>
<comment type="PTM">
    <text evidence="15">Acetylated. Deacetylated by SIRT2, thereby inhibiting Schwann cell peripheral myelination.</text>
</comment>
<comment type="PTM">
    <text evidence="1 20">Phosphorylation at Ser-824 by PRKCZ and PRKCI occurs at the most apical tip of epithelial cell-cell contacts during the initial phase of tight junction formation and may promote dissociation of the complex with PARD6. EGF-induced Tyr-1123 phosphorylation mediates dissociation from LIMK2 (By similarity). Phosphorylation by AURKA at Ser-958 is required for the normal establishment of neuronal polarity (By similarity). Isoform 4 and isoform 5 are phosphorylated during oocyte maturation (Probable).</text>
</comment>
<comment type="similarity">
    <text evidence="20">Belongs to the PAR3 family.</text>
</comment>
<name>PARD3_MOUSE</name>
<evidence type="ECO:0000250" key="1"/>
<evidence type="ECO:0000250" key="2">
    <source>
        <dbReference type="UniProtKB" id="Q8TEW0"/>
    </source>
</evidence>
<evidence type="ECO:0000250" key="3">
    <source>
        <dbReference type="UniProtKB" id="Q9Z340"/>
    </source>
</evidence>
<evidence type="ECO:0000255" key="4"/>
<evidence type="ECO:0000255" key="5">
    <source>
        <dbReference type="PROSITE-ProRule" id="PRU00143"/>
    </source>
</evidence>
<evidence type="ECO:0000256" key="6">
    <source>
        <dbReference type="SAM" id="MobiDB-lite"/>
    </source>
</evidence>
<evidence type="ECO:0000269" key="7">
    <source>
    </source>
</evidence>
<evidence type="ECO:0000269" key="8">
    <source>
    </source>
</evidence>
<evidence type="ECO:0000269" key="9">
    <source>
    </source>
</evidence>
<evidence type="ECO:0000269" key="10">
    <source>
    </source>
</evidence>
<evidence type="ECO:0000269" key="11">
    <source>
    </source>
</evidence>
<evidence type="ECO:0000269" key="12">
    <source>
    </source>
</evidence>
<evidence type="ECO:0000269" key="13">
    <source>
    </source>
</evidence>
<evidence type="ECO:0000269" key="14">
    <source>
    </source>
</evidence>
<evidence type="ECO:0000269" key="15">
    <source>
    </source>
</evidence>
<evidence type="ECO:0000269" key="16">
    <source>
    </source>
</evidence>
<evidence type="ECO:0000303" key="17">
    <source>
    </source>
</evidence>
<evidence type="ECO:0000303" key="18">
    <source>
    </source>
</evidence>
<evidence type="ECO:0000303" key="19">
    <source>
    </source>
</evidence>
<evidence type="ECO:0000305" key="20"/>
<evidence type="ECO:0007744" key="21">
    <source>
    </source>
</evidence>
<evidence type="ECO:0007829" key="22">
    <source>
        <dbReference type="PDB" id="2KOH"/>
    </source>
</evidence>
<evidence type="ECO:0007829" key="23">
    <source>
        <dbReference type="PDB" id="2KOJ"/>
    </source>
</evidence>